<sequence>MEYKDTLLMPKTDFPMRGNLPNKEPEWQAKWEEEKLYEKIQEKNAGRKAYILHDGPPYANGELHMGHALNKTIKDIIVRYKSMAGFSSPYVPGWDTHGLPIETAIAKKGVKRKEMSIAEFRKLCAEYAMTQVDGQRTGFKRLGINGDWENPYITLLPEYEAEQIKVFGEMAKKGYIYKGKKPVYWSPSSESALAEAEIEYQDKTSASIFVAFKVTDGKGVLDEGTNIVIWTTTPWTIPANMGITVNPDLDYVVIESAGEKYVVAEALLPSLREKLGFEDATVVKTVRGSELDRVVTKHPFYDRDSLVMNGEHATAEAGTGAVHTAPGHGEDDFLIGKKYDLEILAPLDDRGVFTEEAPGFEGVFYDTANKMVTEKLEEVGALLKMEFITHSYPHDWRTKKPVIFRATAQWFASIDAFRDDLLAAVKGVNWTPAWGETRLFNMVRDRGDWVISRQRAWGVPLPIFYAENGEAIITDETINHISELFREHGSNVWFERDVKDLLPAGFTHPGSPNGEFTKETDIMDVWFDSGSSHQAVLNARPELSRPADLYMEGSDQYRGWFNSSLTTAVAITGEAPYRNVLSHGFALDGEGRKMSKSLGNTLLPGKVIKQLGADIVRLWVASVDYQADVRVSDEILKQVSEVYRKIRNTMRFLLGNINDFNPTTNGVSYENLREVDKYMLIKLNDLVKNVKDSYEAFEFSTIYHQINNFCTVELSQFYMDFAKDVVYIEAADSHDRRAMQTVFYEAVVTLTKLLAPILPHTTEEVWNSLIGEGAESIHLQDLPDVKVLADSEEITAKWDAFMQIRDNVQKALEFARNEKLIGKSMLAKVTLYVDGEAKTLFDSLEGDFAQLFIVSDFELVEGLENAPESAFKSNQVAVQITVAEGETCERCRVVKKDVGVNPKHPTLCGRCADIVVKHYEA</sequence>
<gene>
    <name evidence="1" type="primary">ileS</name>
    <name type="ordered locus">lin2127</name>
</gene>
<keyword id="KW-0030">Aminoacyl-tRNA synthetase</keyword>
<keyword id="KW-0067">ATP-binding</keyword>
<keyword id="KW-0963">Cytoplasm</keyword>
<keyword id="KW-0436">Ligase</keyword>
<keyword id="KW-0479">Metal-binding</keyword>
<keyword id="KW-0547">Nucleotide-binding</keyword>
<keyword id="KW-0648">Protein biosynthesis</keyword>
<keyword id="KW-0862">Zinc</keyword>
<comment type="function">
    <text evidence="1">Catalyzes the attachment of isoleucine to tRNA(Ile). As IleRS can inadvertently accommodate and process structurally similar amino acids such as valine, to avoid such errors it has two additional distinct tRNA(Ile)-dependent editing activities. One activity is designated as 'pretransfer' editing and involves the hydrolysis of activated Val-AMP. The other activity is designated 'posttransfer' editing and involves deacylation of mischarged Val-tRNA(Ile).</text>
</comment>
<comment type="catalytic activity">
    <reaction evidence="1">
        <text>tRNA(Ile) + L-isoleucine + ATP = L-isoleucyl-tRNA(Ile) + AMP + diphosphate</text>
        <dbReference type="Rhea" id="RHEA:11060"/>
        <dbReference type="Rhea" id="RHEA-COMP:9666"/>
        <dbReference type="Rhea" id="RHEA-COMP:9695"/>
        <dbReference type="ChEBI" id="CHEBI:30616"/>
        <dbReference type="ChEBI" id="CHEBI:33019"/>
        <dbReference type="ChEBI" id="CHEBI:58045"/>
        <dbReference type="ChEBI" id="CHEBI:78442"/>
        <dbReference type="ChEBI" id="CHEBI:78528"/>
        <dbReference type="ChEBI" id="CHEBI:456215"/>
        <dbReference type="EC" id="6.1.1.5"/>
    </reaction>
</comment>
<comment type="cofactor">
    <cofactor evidence="1">
        <name>Zn(2+)</name>
        <dbReference type="ChEBI" id="CHEBI:29105"/>
    </cofactor>
    <text evidence="1">Binds 1 zinc ion per subunit.</text>
</comment>
<comment type="subunit">
    <text evidence="1">Monomer.</text>
</comment>
<comment type="subcellular location">
    <subcellularLocation>
        <location evidence="1">Cytoplasm</location>
    </subcellularLocation>
</comment>
<comment type="domain">
    <text evidence="1">IleRS has two distinct active sites: one for aminoacylation and one for editing. The misactivated valine is translocated from the active site to the editing site, which sterically excludes the correctly activated isoleucine. The single editing site contains two valyl binding pockets, one specific for each substrate (Val-AMP or Val-tRNA(Ile)).</text>
</comment>
<comment type="similarity">
    <text evidence="1">Belongs to the class-I aminoacyl-tRNA synthetase family. IleS type 1 subfamily.</text>
</comment>
<accession>Q929Z6</accession>
<evidence type="ECO:0000255" key="1">
    <source>
        <dbReference type="HAMAP-Rule" id="MF_02002"/>
    </source>
</evidence>
<proteinExistence type="inferred from homology"/>
<organism>
    <name type="scientific">Listeria innocua serovar 6a (strain ATCC BAA-680 / CLIP 11262)</name>
    <dbReference type="NCBI Taxonomy" id="272626"/>
    <lineage>
        <taxon>Bacteria</taxon>
        <taxon>Bacillati</taxon>
        <taxon>Bacillota</taxon>
        <taxon>Bacilli</taxon>
        <taxon>Bacillales</taxon>
        <taxon>Listeriaceae</taxon>
        <taxon>Listeria</taxon>
    </lineage>
</organism>
<dbReference type="EC" id="6.1.1.5" evidence="1"/>
<dbReference type="EMBL" id="AL596171">
    <property type="protein sequence ID" value="CAC97357.1"/>
    <property type="molecule type" value="Genomic_DNA"/>
</dbReference>
<dbReference type="PIR" id="AE1698">
    <property type="entry name" value="AE1698"/>
</dbReference>
<dbReference type="RefSeq" id="WP_010991768.1">
    <property type="nucleotide sequence ID" value="NC_003212.1"/>
</dbReference>
<dbReference type="SMR" id="Q929Z6"/>
<dbReference type="STRING" id="272626.gene:17566485"/>
<dbReference type="KEGG" id="lin:ileS"/>
<dbReference type="eggNOG" id="COG0060">
    <property type="taxonomic scope" value="Bacteria"/>
</dbReference>
<dbReference type="HOGENOM" id="CLU_001493_7_1_9"/>
<dbReference type="OrthoDB" id="9810365at2"/>
<dbReference type="Proteomes" id="UP000002513">
    <property type="component" value="Chromosome"/>
</dbReference>
<dbReference type="GO" id="GO:0005829">
    <property type="term" value="C:cytosol"/>
    <property type="evidence" value="ECO:0007669"/>
    <property type="project" value="TreeGrafter"/>
</dbReference>
<dbReference type="GO" id="GO:0002161">
    <property type="term" value="F:aminoacyl-tRNA deacylase activity"/>
    <property type="evidence" value="ECO:0007669"/>
    <property type="project" value="InterPro"/>
</dbReference>
<dbReference type="GO" id="GO:0005524">
    <property type="term" value="F:ATP binding"/>
    <property type="evidence" value="ECO:0007669"/>
    <property type="project" value="UniProtKB-UniRule"/>
</dbReference>
<dbReference type="GO" id="GO:0004822">
    <property type="term" value="F:isoleucine-tRNA ligase activity"/>
    <property type="evidence" value="ECO:0007669"/>
    <property type="project" value="UniProtKB-UniRule"/>
</dbReference>
<dbReference type="GO" id="GO:0000049">
    <property type="term" value="F:tRNA binding"/>
    <property type="evidence" value="ECO:0007669"/>
    <property type="project" value="InterPro"/>
</dbReference>
<dbReference type="GO" id="GO:0008270">
    <property type="term" value="F:zinc ion binding"/>
    <property type="evidence" value="ECO:0007669"/>
    <property type="project" value="UniProtKB-UniRule"/>
</dbReference>
<dbReference type="GO" id="GO:0006428">
    <property type="term" value="P:isoleucyl-tRNA aminoacylation"/>
    <property type="evidence" value="ECO:0007669"/>
    <property type="project" value="UniProtKB-UniRule"/>
</dbReference>
<dbReference type="CDD" id="cd07960">
    <property type="entry name" value="Anticodon_Ia_Ile_BEm"/>
    <property type="match status" value="1"/>
</dbReference>
<dbReference type="CDD" id="cd00818">
    <property type="entry name" value="IleRS_core"/>
    <property type="match status" value="1"/>
</dbReference>
<dbReference type="FunFam" id="1.10.10.830:FF:000001">
    <property type="entry name" value="Isoleucine--tRNA ligase"/>
    <property type="match status" value="1"/>
</dbReference>
<dbReference type="FunFam" id="1.10.730.20:FF:000001">
    <property type="entry name" value="Isoleucine--tRNA ligase"/>
    <property type="match status" value="1"/>
</dbReference>
<dbReference type="FunFam" id="3.40.50.620:FF:000152">
    <property type="entry name" value="Isoleucine--tRNA ligase"/>
    <property type="match status" value="1"/>
</dbReference>
<dbReference type="FunFam" id="3.90.740.10:FF:000006">
    <property type="entry name" value="Isoleucine--tRNA ligase"/>
    <property type="match status" value="1"/>
</dbReference>
<dbReference type="Gene3D" id="1.10.730.20">
    <property type="match status" value="1"/>
</dbReference>
<dbReference type="Gene3D" id="3.40.50.620">
    <property type="entry name" value="HUPs"/>
    <property type="match status" value="2"/>
</dbReference>
<dbReference type="Gene3D" id="1.10.10.830">
    <property type="entry name" value="Ile-tRNA synthetase CP2 domain-like"/>
    <property type="match status" value="1"/>
</dbReference>
<dbReference type="Gene3D" id="3.90.740.10">
    <property type="entry name" value="Valyl/Leucyl/Isoleucyl-tRNA synthetase, editing domain"/>
    <property type="match status" value="1"/>
</dbReference>
<dbReference type="HAMAP" id="MF_02002">
    <property type="entry name" value="Ile_tRNA_synth_type1"/>
    <property type="match status" value="1"/>
</dbReference>
<dbReference type="InterPro" id="IPR001412">
    <property type="entry name" value="aa-tRNA-synth_I_CS"/>
</dbReference>
<dbReference type="InterPro" id="IPR002300">
    <property type="entry name" value="aa-tRNA-synth_Ia"/>
</dbReference>
<dbReference type="InterPro" id="IPR033708">
    <property type="entry name" value="Anticodon_Ile_BEm"/>
</dbReference>
<dbReference type="InterPro" id="IPR002301">
    <property type="entry name" value="Ile-tRNA-ligase"/>
</dbReference>
<dbReference type="InterPro" id="IPR023585">
    <property type="entry name" value="Ile-tRNA-ligase_type1"/>
</dbReference>
<dbReference type="InterPro" id="IPR050081">
    <property type="entry name" value="Ile-tRNA_ligase"/>
</dbReference>
<dbReference type="InterPro" id="IPR013155">
    <property type="entry name" value="M/V/L/I-tRNA-synth_anticd-bd"/>
</dbReference>
<dbReference type="InterPro" id="IPR014729">
    <property type="entry name" value="Rossmann-like_a/b/a_fold"/>
</dbReference>
<dbReference type="InterPro" id="IPR009080">
    <property type="entry name" value="tRNAsynth_Ia_anticodon-bd"/>
</dbReference>
<dbReference type="InterPro" id="IPR009008">
    <property type="entry name" value="Val/Leu/Ile-tRNA-synth_edit"/>
</dbReference>
<dbReference type="InterPro" id="IPR010663">
    <property type="entry name" value="Znf_FPG/IleRS"/>
</dbReference>
<dbReference type="NCBIfam" id="TIGR00392">
    <property type="entry name" value="ileS"/>
    <property type="match status" value="1"/>
</dbReference>
<dbReference type="PANTHER" id="PTHR42765:SF1">
    <property type="entry name" value="ISOLEUCINE--TRNA LIGASE, MITOCHONDRIAL"/>
    <property type="match status" value="1"/>
</dbReference>
<dbReference type="PANTHER" id="PTHR42765">
    <property type="entry name" value="SOLEUCYL-TRNA SYNTHETASE"/>
    <property type="match status" value="1"/>
</dbReference>
<dbReference type="Pfam" id="PF08264">
    <property type="entry name" value="Anticodon_1"/>
    <property type="match status" value="1"/>
</dbReference>
<dbReference type="Pfam" id="PF00133">
    <property type="entry name" value="tRNA-synt_1"/>
    <property type="match status" value="1"/>
</dbReference>
<dbReference type="Pfam" id="PF06827">
    <property type="entry name" value="zf-FPG_IleRS"/>
    <property type="match status" value="1"/>
</dbReference>
<dbReference type="PRINTS" id="PR00984">
    <property type="entry name" value="TRNASYNTHILE"/>
</dbReference>
<dbReference type="SUPFAM" id="SSF47323">
    <property type="entry name" value="Anticodon-binding domain of a subclass of class I aminoacyl-tRNA synthetases"/>
    <property type="match status" value="1"/>
</dbReference>
<dbReference type="SUPFAM" id="SSF52374">
    <property type="entry name" value="Nucleotidylyl transferase"/>
    <property type="match status" value="1"/>
</dbReference>
<dbReference type="SUPFAM" id="SSF50677">
    <property type="entry name" value="ValRS/IleRS/LeuRS editing domain"/>
    <property type="match status" value="1"/>
</dbReference>
<dbReference type="PROSITE" id="PS00178">
    <property type="entry name" value="AA_TRNA_LIGASE_I"/>
    <property type="match status" value="1"/>
</dbReference>
<feature type="chain" id="PRO_0000098410" description="Isoleucine--tRNA ligase">
    <location>
        <begin position="1"/>
        <end position="921"/>
    </location>
</feature>
<feature type="short sequence motif" description="'HIGH' region">
    <location>
        <begin position="57"/>
        <end position="67"/>
    </location>
</feature>
<feature type="short sequence motif" description="'KMSKS' region">
    <location>
        <begin position="593"/>
        <end position="597"/>
    </location>
</feature>
<feature type="binding site" evidence="1">
    <location>
        <position position="552"/>
    </location>
    <ligand>
        <name>L-isoleucyl-5'-AMP</name>
        <dbReference type="ChEBI" id="CHEBI:178002"/>
    </ligand>
</feature>
<feature type="binding site" evidence="1">
    <location>
        <position position="596"/>
    </location>
    <ligand>
        <name>ATP</name>
        <dbReference type="ChEBI" id="CHEBI:30616"/>
    </ligand>
</feature>
<feature type="binding site" evidence="1">
    <location>
        <position position="888"/>
    </location>
    <ligand>
        <name>Zn(2+)</name>
        <dbReference type="ChEBI" id="CHEBI:29105"/>
    </ligand>
</feature>
<feature type="binding site" evidence="1">
    <location>
        <position position="891"/>
    </location>
    <ligand>
        <name>Zn(2+)</name>
        <dbReference type="ChEBI" id="CHEBI:29105"/>
    </ligand>
</feature>
<feature type="binding site" evidence="1">
    <location>
        <position position="908"/>
    </location>
    <ligand>
        <name>Zn(2+)</name>
        <dbReference type="ChEBI" id="CHEBI:29105"/>
    </ligand>
</feature>
<feature type="binding site" evidence="1">
    <location>
        <position position="911"/>
    </location>
    <ligand>
        <name>Zn(2+)</name>
        <dbReference type="ChEBI" id="CHEBI:29105"/>
    </ligand>
</feature>
<name>SYI_LISIN</name>
<reference key="1">
    <citation type="journal article" date="2001" name="Science">
        <title>Comparative genomics of Listeria species.</title>
        <authorList>
            <person name="Glaser P."/>
            <person name="Frangeul L."/>
            <person name="Buchrieser C."/>
            <person name="Rusniok C."/>
            <person name="Amend A."/>
            <person name="Baquero F."/>
            <person name="Berche P."/>
            <person name="Bloecker H."/>
            <person name="Brandt P."/>
            <person name="Chakraborty T."/>
            <person name="Charbit A."/>
            <person name="Chetouani F."/>
            <person name="Couve E."/>
            <person name="de Daruvar A."/>
            <person name="Dehoux P."/>
            <person name="Domann E."/>
            <person name="Dominguez-Bernal G."/>
            <person name="Duchaud E."/>
            <person name="Durant L."/>
            <person name="Dussurget O."/>
            <person name="Entian K.-D."/>
            <person name="Fsihi H."/>
            <person name="Garcia-del Portillo F."/>
            <person name="Garrido P."/>
            <person name="Gautier L."/>
            <person name="Goebel W."/>
            <person name="Gomez-Lopez N."/>
            <person name="Hain T."/>
            <person name="Hauf J."/>
            <person name="Jackson D."/>
            <person name="Jones L.-M."/>
            <person name="Kaerst U."/>
            <person name="Kreft J."/>
            <person name="Kuhn M."/>
            <person name="Kunst F."/>
            <person name="Kurapkat G."/>
            <person name="Madueno E."/>
            <person name="Maitournam A."/>
            <person name="Mata Vicente J."/>
            <person name="Ng E."/>
            <person name="Nedjari H."/>
            <person name="Nordsiek G."/>
            <person name="Novella S."/>
            <person name="de Pablos B."/>
            <person name="Perez-Diaz J.-C."/>
            <person name="Purcell R."/>
            <person name="Remmel B."/>
            <person name="Rose M."/>
            <person name="Schlueter T."/>
            <person name="Simoes N."/>
            <person name="Tierrez A."/>
            <person name="Vazquez-Boland J.-A."/>
            <person name="Voss H."/>
            <person name="Wehland J."/>
            <person name="Cossart P."/>
        </authorList>
    </citation>
    <scope>NUCLEOTIDE SEQUENCE [LARGE SCALE GENOMIC DNA]</scope>
    <source>
        <strain>ATCC BAA-680 / CLIP 11262</strain>
    </source>
</reference>
<protein>
    <recommendedName>
        <fullName evidence="1">Isoleucine--tRNA ligase</fullName>
        <ecNumber evidence="1">6.1.1.5</ecNumber>
    </recommendedName>
    <alternativeName>
        <fullName evidence="1">Isoleucyl-tRNA synthetase</fullName>
        <shortName evidence="1">IleRS</shortName>
    </alternativeName>
</protein>